<keyword id="KW-0002">3D-structure</keyword>
<keyword id="KW-0007">Acetylation</keyword>
<keyword id="KW-0963">Cytoplasm</keyword>
<keyword id="KW-0903">Direct protein sequencing</keyword>
<keyword id="KW-1017">Isopeptide bond</keyword>
<keyword id="KW-1185">Reference proteome</keyword>
<keyword id="KW-0687">Ribonucleoprotein</keyword>
<keyword id="KW-0689">Ribosomal protein</keyword>
<keyword id="KW-0832">Ubl conjugation</keyword>
<feature type="initiator methionine" description="Removed" evidence="3">
    <location>
        <position position="1"/>
    </location>
</feature>
<feature type="chain" id="PRO_0000133791" description="Large ribosomal subunit protein uL13A">
    <location>
        <begin position="2"/>
        <end position="199"/>
    </location>
</feature>
<feature type="modified residue" description="N-acetylserine" evidence="3">
    <location>
        <position position="2"/>
    </location>
</feature>
<feature type="cross-link" description="Glycyl lysine isopeptide (Lys-Gly) (interchain with G-Cter in ubiquitin)" evidence="10">
    <location>
        <position position="177"/>
    </location>
</feature>
<feature type="sequence conflict" description="In Ref. 3; AA sequence." evidence="7" ref="3">
    <original>H</original>
    <variation>L</variation>
    <location>
        <position position="14"/>
    </location>
</feature>
<feature type="sequence conflict" description="In Ref. 3; AA sequence." evidence="7" ref="3">
    <original>S</original>
    <variation>E</variation>
    <location>
        <position position="21"/>
    </location>
</feature>
<feature type="strand" evidence="11">
    <location>
        <begin position="12"/>
        <end position="14"/>
    </location>
</feature>
<feature type="helix" evidence="11">
    <location>
        <begin position="16"/>
        <end position="28"/>
    </location>
</feature>
<feature type="strand" evidence="11">
    <location>
        <begin position="35"/>
        <end position="37"/>
    </location>
</feature>
<feature type="helix" evidence="11">
    <location>
        <begin position="38"/>
        <end position="40"/>
    </location>
</feature>
<feature type="helix" evidence="11">
    <location>
        <begin position="47"/>
        <end position="59"/>
    </location>
</feature>
<feature type="helix" evidence="11">
    <location>
        <begin position="66"/>
        <end position="68"/>
    </location>
</feature>
<feature type="helix" evidence="11">
    <location>
        <begin position="76"/>
        <end position="85"/>
    </location>
</feature>
<feature type="helix" evidence="11">
    <location>
        <begin position="93"/>
        <end position="96"/>
    </location>
</feature>
<feature type="helix" evidence="11">
    <location>
        <begin position="99"/>
        <end position="101"/>
    </location>
</feature>
<feature type="turn" evidence="11">
    <location>
        <begin position="110"/>
        <end position="114"/>
    </location>
</feature>
<feature type="strand" evidence="11">
    <location>
        <begin position="121"/>
        <end position="124"/>
    </location>
</feature>
<feature type="turn" evidence="11">
    <location>
        <begin position="125"/>
        <end position="128"/>
    </location>
</feature>
<feature type="helix" evidence="11">
    <location>
        <begin position="139"/>
        <end position="144"/>
    </location>
</feature>
<feature type="helix" evidence="11">
    <location>
        <begin position="150"/>
        <end position="185"/>
    </location>
</feature>
<feature type="helix" evidence="11">
    <location>
        <begin position="191"/>
        <end position="197"/>
    </location>
</feature>
<dbReference type="EMBL" id="Z38059">
    <property type="protein sequence ID" value="CAA86145.1"/>
    <property type="molecule type" value="Genomic_DNA"/>
</dbReference>
<dbReference type="EMBL" id="BK006942">
    <property type="protein sequence ID" value="DAA08420.1"/>
    <property type="molecule type" value="Genomic_DNA"/>
</dbReference>
<dbReference type="PIR" id="S48401">
    <property type="entry name" value="S48401"/>
</dbReference>
<dbReference type="RefSeq" id="NP_012133.1">
    <property type="nucleotide sequence ID" value="NM_001179481.1"/>
</dbReference>
<dbReference type="PDB" id="3J6X">
    <property type="method" value="EM"/>
    <property type="resolution" value="6.10 A"/>
    <property type="chains" value="56=1-199"/>
</dbReference>
<dbReference type="PDB" id="3J6Y">
    <property type="method" value="EM"/>
    <property type="resolution" value="6.10 A"/>
    <property type="chains" value="56=1-199"/>
</dbReference>
<dbReference type="PDB" id="3J77">
    <property type="method" value="EM"/>
    <property type="resolution" value="6.20 A"/>
    <property type="chains" value="66=1-199"/>
</dbReference>
<dbReference type="PDB" id="3J78">
    <property type="method" value="EM"/>
    <property type="resolution" value="6.30 A"/>
    <property type="chains" value="66=1-199"/>
</dbReference>
<dbReference type="PDB" id="3JCT">
    <property type="method" value="EM"/>
    <property type="resolution" value="3.08 A"/>
    <property type="chains" value="O=1-199"/>
</dbReference>
<dbReference type="PDB" id="4U3M">
    <property type="method" value="X-ray"/>
    <property type="resolution" value="3.00 A"/>
    <property type="chains" value="M6/m6=2-199"/>
</dbReference>
<dbReference type="PDB" id="4U3N">
    <property type="method" value="X-ray"/>
    <property type="resolution" value="3.20 A"/>
    <property type="chains" value="M6/m6=2-199"/>
</dbReference>
<dbReference type="PDB" id="4U3U">
    <property type="method" value="X-ray"/>
    <property type="resolution" value="2.90 A"/>
    <property type="chains" value="M6/m6=2-199"/>
</dbReference>
<dbReference type="PDB" id="4U4N">
    <property type="method" value="X-ray"/>
    <property type="resolution" value="3.10 A"/>
    <property type="chains" value="M6/m6=2-199"/>
</dbReference>
<dbReference type="PDB" id="4U4O">
    <property type="method" value="X-ray"/>
    <property type="resolution" value="3.60 A"/>
    <property type="chains" value="M6/m6=2-199"/>
</dbReference>
<dbReference type="PDB" id="4U4Q">
    <property type="method" value="X-ray"/>
    <property type="resolution" value="3.00 A"/>
    <property type="chains" value="M6/m6=2-199"/>
</dbReference>
<dbReference type="PDB" id="4U4R">
    <property type="method" value="X-ray"/>
    <property type="resolution" value="2.80 A"/>
    <property type="chains" value="M6/m6=2-199"/>
</dbReference>
<dbReference type="PDB" id="4U4U">
    <property type="method" value="X-ray"/>
    <property type="resolution" value="3.00 A"/>
    <property type="chains" value="M6/m6=2-199"/>
</dbReference>
<dbReference type="PDB" id="4U4Y">
    <property type="method" value="X-ray"/>
    <property type="resolution" value="3.20 A"/>
    <property type="chains" value="M6/m6=2-199"/>
</dbReference>
<dbReference type="PDB" id="4U4Z">
    <property type="method" value="X-ray"/>
    <property type="resolution" value="3.10 A"/>
    <property type="chains" value="M6/m6=2-199"/>
</dbReference>
<dbReference type="PDB" id="4U50">
    <property type="method" value="X-ray"/>
    <property type="resolution" value="3.20 A"/>
    <property type="chains" value="M6/m6=2-199"/>
</dbReference>
<dbReference type="PDB" id="4U51">
    <property type="method" value="X-ray"/>
    <property type="resolution" value="3.20 A"/>
    <property type="chains" value="M6/m6=2-199"/>
</dbReference>
<dbReference type="PDB" id="4U52">
    <property type="method" value="X-ray"/>
    <property type="resolution" value="3.00 A"/>
    <property type="chains" value="M6/m6=2-199"/>
</dbReference>
<dbReference type="PDB" id="4U53">
    <property type="method" value="X-ray"/>
    <property type="resolution" value="3.30 A"/>
    <property type="chains" value="M6/m6=2-199"/>
</dbReference>
<dbReference type="PDB" id="4U55">
    <property type="method" value="X-ray"/>
    <property type="resolution" value="3.20 A"/>
    <property type="chains" value="M6/m6=2-199"/>
</dbReference>
<dbReference type="PDB" id="4U56">
    <property type="method" value="X-ray"/>
    <property type="resolution" value="3.45 A"/>
    <property type="chains" value="M6/m6=2-199"/>
</dbReference>
<dbReference type="PDB" id="4U6F">
    <property type="method" value="X-ray"/>
    <property type="resolution" value="3.10 A"/>
    <property type="chains" value="M6/m6=2-199"/>
</dbReference>
<dbReference type="PDB" id="4V4B">
    <property type="method" value="EM"/>
    <property type="resolution" value="11.70 A"/>
    <property type="chains" value="BM=2-147"/>
</dbReference>
<dbReference type="PDB" id="4V5Z">
    <property type="method" value="EM"/>
    <property type="resolution" value="8.70 A"/>
    <property type="chains" value="Bj=1-176"/>
</dbReference>
<dbReference type="PDB" id="4V6I">
    <property type="method" value="EM"/>
    <property type="resolution" value="8.80 A"/>
    <property type="chains" value="BK=1-199"/>
</dbReference>
<dbReference type="PDB" id="4V7F">
    <property type="method" value="EM"/>
    <property type="resolution" value="8.70 A"/>
    <property type="chains" value="J=1-199"/>
</dbReference>
<dbReference type="PDB" id="4V7R">
    <property type="method" value="X-ray"/>
    <property type="resolution" value="4.00 A"/>
    <property type="chains" value="BP/DP=1-199"/>
</dbReference>
<dbReference type="PDB" id="4V88">
    <property type="method" value="X-ray"/>
    <property type="resolution" value="3.00 A"/>
    <property type="chains" value="BO/DO=1-199"/>
</dbReference>
<dbReference type="PDB" id="4V8T">
    <property type="method" value="EM"/>
    <property type="resolution" value="8.10 A"/>
    <property type="chains" value="O=1-199"/>
</dbReference>
<dbReference type="PDB" id="4V8Y">
    <property type="method" value="EM"/>
    <property type="resolution" value="4.30 A"/>
    <property type="chains" value="BO=2-199"/>
</dbReference>
<dbReference type="PDB" id="4V8Z">
    <property type="method" value="EM"/>
    <property type="resolution" value="6.60 A"/>
    <property type="chains" value="BO=2-199"/>
</dbReference>
<dbReference type="PDB" id="4V91">
    <property type="method" value="EM"/>
    <property type="resolution" value="3.70 A"/>
    <property type="chains" value="O=1-199"/>
</dbReference>
<dbReference type="PDB" id="5APN">
    <property type="method" value="EM"/>
    <property type="resolution" value="3.91 A"/>
    <property type="chains" value="O=1-199"/>
</dbReference>
<dbReference type="PDB" id="5APO">
    <property type="method" value="EM"/>
    <property type="resolution" value="3.41 A"/>
    <property type="chains" value="O=1-199"/>
</dbReference>
<dbReference type="PDB" id="5DAT">
    <property type="method" value="X-ray"/>
    <property type="resolution" value="3.15 A"/>
    <property type="chains" value="M6/m6=2-199"/>
</dbReference>
<dbReference type="PDB" id="5DC3">
    <property type="method" value="X-ray"/>
    <property type="resolution" value="3.25 A"/>
    <property type="chains" value="M6/m6=2-199"/>
</dbReference>
<dbReference type="PDB" id="5DGE">
    <property type="method" value="X-ray"/>
    <property type="resolution" value="3.45 A"/>
    <property type="chains" value="M6/m6=2-199"/>
</dbReference>
<dbReference type="PDB" id="5DGF">
    <property type="method" value="X-ray"/>
    <property type="resolution" value="3.30 A"/>
    <property type="chains" value="M6/m6=2-199"/>
</dbReference>
<dbReference type="PDB" id="5DGV">
    <property type="method" value="X-ray"/>
    <property type="resolution" value="3.10 A"/>
    <property type="chains" value="M6/m6=2-199"/>
</dbReference>
<dbReference type="PDB" id="5FCI">
    <property type="method" value="X-ray"/>
    <property type="resolution" value="3.40 A"/>
    <property type="chains" value="M6/m6=2-199"/>
</dbReference>
<dbReference type="PDB" id="5FCJ">
    <property type="method" value="X-ray"/>
    <property type="resolution" value="3.10 A"/>
    <property type="chains" value="M6/m6=2-199"/>
</dbReference>
<dbReference type="PDB" id="5GAK">
    <property type="method" value="EM"/>
    <property type="resolution" value="3.88 A"/>
    <property type="chains" value="Q=1-199"/>
</dbReference>
<dbReference type="PDB" id="5H4P">
    <property type="method" value="EM"/>
    <property type="resolution" value="3.07 A"/>
    <property type="chains" value="O=1-199"/>
</dbReference>
<dbReference type="PDB" id="5I4L">
    <property type="method" value="X-ray"/>
    <property type="resolution" value="3.10 A"/>
    <property type="chains" value="M6/m6=3-199"/>
</dbReference>
<dbReference type="PDB" id="5JCS">
    <property type="method" value="EM"/>
    <property type="resolution" value="9.50 A"/>
    <property type="chains" value="O=1-199"/>
</dbReference>
<dbReference type="PDB" id="5JUO">
    <property type="method" value="EM"/>
    <property type="resolution" value="4.00 A"/>
    <property type="chains" value="T=1-199"/>
</dbReference>
<dbReference type="PDB" id="5JUP">
    <property type="method" value="EM"/>
    <property type="resolution" value="3.50 A"/>
    <property type="chains" value="T=1-199"/>
</dbReference>
<dbReference type="PDB" id="5JUS">
    <property type="method" value="EM"/>
    <property type="resolution" value="4.20 A"/>
    <property type="chains" value="T=1-199"/>
</dbReference>
<dbReference type="PDB" id="5JUT">
    <property type="method" value="EM"/>
    <property type="resolution" value="4.00 A"/>
    <property type="chains" value="T=1-199"/>
</dbReference>
<dbReference type="PDB" id="5JUU">
    <property type="method" value="EM"/>
    <property type="resolution" value="4.00 A"/>
    <property type="chains" value="T=1-199"/>
</dbReference>
<dbReference type="PDB" id="5LYB">
    <property type="method" value="X-ray"/>
    <property type="resolution" value="3.25 A"/>
    <property type="chains" value="M6/m6=3-199"/>
</dbReference>
<dbReference type="PDB" id="5M1J">
    <property type="method" value="EM"/>
    <property type="resolution" value="3.30 A"/>
    <property type="chains" value="K5=3-199"/>
</dbReference>
<dbReference type="PDB" id="5MC6">
    <property type="method" value="EM"/>
    <property type="resolution" value="3.80 A"/>
    <property type="chains" value="AU=1-199"/>
</dbReference>
<dbReference type="PDB" id="5MEI">
    <property type="method" value="X-ray"/>
    <property type="resolution" value="3.50 A"/>
    <property type="chains" value="CQ/w=3-199"/>
</dbReference>
<dbReference type="PDB" id="5NDG">
    <property type="method" value="X-ray"/>
    <property type="resolution" value="3.70 A"/>
    <property type="chains" value="M6/m6=3-199"/>
</dbReference>
<dbReference type="PDB" id="5NDV">
    <property type="method" value="X-ray"/>
    <property type="resolution" value="3.30 A"/>
    <property type="chains" value="M6/m6=3-199"/>
</dbReference>
<dbReference type="PDB" id="5NDW">
    <property type="method" value="X-ray"/>
    <property type="resolution" value="3.70 A"/>
    <property type="chains" value="M6/m6=3-199"/>
</dbReference>
<dbReference type="PDB" id="5OBM">
    <property type="method" value="X-ray"/>
    <property type="resolution" value="3.40 A"/>
    <property type="chains" value="M6/m6=3-199"/>
</dbReference>
<dbReference type="PDB" id="5ON6">
    <property type="method" value="X-ray"/>
    <property type="resolution" value="3.10 A"/>
    <property type="chains" value="CQ/w=3-199"/>
</dbReference>
<dbReference type="PDB" id="5T62">
    <property type="method" value="EM"/>
    <property type="resolution" value="3.30 A"/>
    <property type="chains" value="b=1-199"/>
</dbReference>
<dbReference type="PDB" id="5T6R">
    <property type="method" value="EM"/>
    <property type="resolution" value="4.50 A"/>
    <property type="chains" value="b=1-199"/>
</dbReference>
<dbReference type="PDB" id="5TBW">
    <property type="method" value="X-ray"/>
    <property type="resolution" value="3.00 A"/>
    <property type="chains" value="CQ/w=3-199"/>
</dbReference>
<dbReference type="PDB" id="5TGA">
    <property type="method" value="X-ray"/>
    <property type="resolution" value="3.30 A"/>
    <property type="chains" value="M6/m6=3-199"/>
</dbReference>
<dbReference type="PDB" id="5TGM">
    <property type="method" value="X-ray"/>
    <property type="resolution" value="3.50 A"/>
    <property type="chains" value="M6/m6=3-199"/>
</dbReference>
<dbReference type="PDB" id="5Z3G">
    <property type="method" value="EM"/>
    <property type="resolution" value="3.65 A"/>
    <property type="chains" value="S=1-199"/>
</dbReference>
<dbReference type="PDB" id="6C0F">
    <property type="method" value="EM"/>
    <property type="resolution" value="3.70 A"/>
    <property type="chains" value="O=1-199"/>
</dbReference>
<dbReference type="PDB" id="6CB1">
    <property type="method" value="EM"/>
    <property type="resolution" value="4.60 A"/>
    <property type="chains" value="O=1-199"/>
</dbReference>
<dbReference type="PDB" id="6ELZ">
    <property type="method" value="EM"/>
    <property type="resolution" value="3.30 A"/>
    <property type="chains" value="O=1-199"/>
</dbReference>
<dbReference type="PDB" id="6EM1">
    <property type="method" value="EM"/>
    <property type="resolution" value="3.60 A"/>
    <property type="chains" value="O=1-199"/>
</dbReference>
<dbReference type="PDB" id="6EM3">
    <property type="method" value="EM"/>
    <property type="resolution" value="3.20 A"/>
    <property type="chains" value="O=1-199"/>
</dbReference>
<dbReference type="PDB" id="6EM4">
    <property type="method" value="EM"/>
    <property type="resolution" value="4.10 A"/>
    <property type="chains" value="O=1-199"/>
</dbReference>
<dbReference type="PDB" id="6EM5">
    <property type="method" value="EM"/>
    <property type="resolution" value="4.30 A"/>
    <property type="chains" value="O=1-199"/>
</dbReference>
<dbReference type="PDB" id="6FT6">
    <property type="method" value="EM"/>
    <property type="resolution" value="3.90 A"/>
    <property type="chains" value="O=1-199"/>
</dbReference>
<dbReference type="PDB" id="6GQ1">
    <property type="method" value="EM"/>
    <property type="resolution" value="4.40 A"/>
    <property type="chains" value="O=3-199"/>
</dbReference>
<dbReference type="PDB" id="6GQB">
    <property type="method" value="EM"/>
    <property type="resolution" value="3.90 A"/>
    <property type="chains" value="O=3-199"/>
</dbReference>
<dbReference type="PDB" id="6GQV">
    <property type="method" value="EM"/>
    <property type="resolution" value="4.00 A"/>
    <property type="chains" value="O=3-199"/>
</dbReference>
<dbReference type="PDB" id="6HD7">
    <property type="method" value="EM"/>
    <property type="resolution" value="3.40 A"/>
    <property type="chains" value="Q=1-199"/>
</dbReference>
<dbReference type="PDB" id="6HHQ">
    <property type="method" value="X-ray"/>
    <property type="resolution" value="3.10 A"/>
    <property type="chains" value="CQ/w=1-199"/>
</dbReference>
<dbReference type="PDB" id="6I7O">
    <property type="method" value="EM"/>
    <property type="resolution" value="5.30 A"/>
    <property type="chains" value="AU/XU=3-199"/>
</dbReference>
<dbReference type="PDB" id="6M62">
    <property type="method" value="EM"/>
    <property type="resolution" value="3.20 A"/>
    <property type="chains" value="O=1-199"/>
</dbReference>
<dbReference type="PDB" id="6N8J">
    <property type="method" value="EM"/>
    <property type="resolution" value="3.50 A"/>
    <property type="chains" value="O=1-199"/>
</dbReference>
<dbReference type="PDB" id="6N8K">
    <property type="method" value="EM"/>
    <property type="resolution" value="3.60 A"/>
    <property type="chains" value="O=1-199"/>
</dbReference>
<dbReference type="PDB" id="6N8L">
    <property type="method" value="EM"/>
    <property type="resolution" value="3.60 A"/>
    <property type="chains" value="O=1-199"/>
</dbReference>
<dbReference type="PDB" id="6N8M">
    <property type="method" value="EM"/>
    <property type="resolution" value="3.50 A"/>
    <property type="chains" value="b=1-199"/>
</dbReference>
<dbReference type="PDB" id="6N8N">
    <property type="method" value="EM"/>
    <property type="resolution" value="3.80 A"/>
    <property type="chains" value="b=1-199"/>
</dbReference>
<dbReference type="PDB" id="6N8O">
    <property type="method" value="EM"/>
    <property type="resolution" value="3.50 A"/>
    <property type="chains" value="b=1-199"/>
</dbReference>
<dbReference type="PDB" id="6OIG">
    <property type="method" value="EM"/>
    <property type="resolution" value="3.80 A"/>
    <property type="chains" value="O=3-199"/>
</dbReference>
<dbReference type="PDB" id="6Q8Y">
    <property type="method" value="EM"/>
    <property type="resolution" value="3.10 A"/>
    <property type="chains" value="AU=3-199"/>
</dbReference>
<dbReference type="PDB" id="6R84">
    <property type="method" value="EM"/>
    <property type="resolution" value="3.60 A"/>
    <property type="chains" value="Q=3-199"/>
</dbReference>
<dbReference type="PDB" id="6R86">
    <property type="method" value="EM"/>
    <property type="resolution" value="3.40 A"/>
    <property type="chains" value="Q=3-199"/>
</dbReference>
<dbReference type="PDB" id="6R87">
    <property type="method" value="EM"/>
    <property type="resolution" value="3.40 A"/>
    <property type="chains" value="Q=3-199"/>
</dbReference>
<dbReference type="PDB" id="6S47">
    <property type="method" value="EM"/>
    <property type="resolution" value="3.28 A"/>
    <property type="chains" value="AQ=2-199"/>
</dbReference>
<dbReference type="PDB" id="6SNT">
    <property type="method" value="EM"/>
    <property type="resolution" value="2.80 A"/>
    <property type="chains" value="u=1-199"/>
</dbReference>
<dbReference type="PDB" id="6SV4">
    <property type="method" value="EM"/>
    <property type="resolution" value="3.30 A"/>
    <property type="chains" value="AU/XU/zU=1-199"/>
</dbReference>
<dbReference type="PDB" id="6T4Q">
    <property type="method" value="EM"/>
    <property type="resolution" value="2.60 A"/>
    <property type="chains" value="LO=3-199"/>
</dbReference>
<dbReference type="PDB" id="6T7I">
    <property type="method" value="EM"/>
    <property type="resolution" value="3.20 A"/>
    <property type="chains" value="LO=1-199"/>
</dbReference>
<dbReference type="PDB" id="6T7T">
    <property type="method" value="EM"/>
    <property type="resolution" value="3.10 A"/>
    <property type="chains" value="LO=1-199"/>
</dbReference>
<dbReference type="PDB" id="6T83">
    <property type="method" value="EM"/>
    <property type="resolution" value="4.00 A"/>
    <property type="chains" value="Oy/Qa=1-199"/>
</dbReference>
<dbReference type="PDB" id="6TB3">
    <property type="method" value="EM"/>
    <property type="resolution" value="2.80 A"/>
    <property type="chains" value="AU=3-199"/>
</dbReference>
<dbReference type="PDB" id="6TNU">
    <property type="method" value="EM"/>
    <property type="resolution" value="3.10 A"/>
    <property type="chains" value="AU=3-199"/>
</dbReference>
<dbReference type="PDB" id="6WOO">
    <property type="method" value="EM"/>
    <property type="resolution" value="2.90 A"/>
    <property type="chains" value="O=3-199"/>
</dbReference>
<dbReference type="PDB" id="6XIQ">
    <property type="method" value="EM"/>
    <property type="resolution" value="4.20 A"/>
    <property type="chains" value="O=1-199"/>
</dbReference>
<dbReference type="PDB" id="6XIR">
    <property type="method" value="EM"/>
    <property type="resolution" value="3.20 A"/>
    <property type="chains" value="O=1-199"/>
</dbReference>
<dbReference type="PDB" id="6YLG">
    <property type="method" value="EM"/>
    <property type="resolution" value="3.00 A"/>
    <property type="chains" value="O=1-199"/>
</dbReference>
<dbReference type="PDB" id="6YLH">
    <property type="method" value="EM"/>
    <property type="resolution" value="3.10 A"/>
    <property type="chains" value="O=1-199"/>
</dbReference>
<dbReference type="PDB" id="6YLX">
    <property type="method" value="EM"/>
    <property type="resolution" value="3.90 A"/>
    <property type="chains" value="O=1-199"/>
</dbReference>
<dbReference type="PDB" id="6YLY">
    <property type="method" value="EM"/>
    <property type="resolution" value="3.80 A"/>
    <property type="chains" value="O=1-199"/>
</dbReference>
<dbReference type="PDB" id="6Z6J">
    <property type="method" value="EM"/>
    <property type="resolution" value="3.40 A"/>
    <property type="chains" value="LO=1-199"/>
</dbReference>
<dbReference type="PDB" id="6Z6K">
    <property type="method" value="EM"/>
    <property type="resolution" value="3.40 A"/>
    <property type="chains" value="LO=1-199"/>
</dbReference>
<dbReference type="PDB" id="7AZY">
    <property type="method" value="EM"/>
    <property type="resolution" value="2.88 A"/>
    <property type="chains" value="V=1-199"/>
</dbReference>
<dbReference type="PDB" id="7B7D">
    <property type="method" value="EM"/>
    <property type="resolution" value="3.30 A"/>
    <property type="chains" value="LQ=3-199"/>
</dbReference>
<dbReference type="PDB" id="7BT6">
    <property type="method" value="EM"/>
    <property type="resolution" value="3.12 A"/>
    <property type="chains" value="O=1-199"/>
</dbReference>
<dbReference type="PDB" id="7BTB">
    <property type="method" value="EM"/>
    <property type="resolution" value="3.22 A"/>
    <property type="chains" value="O=1-199"/>
</dbReference>
<dbReference type="PDB" id="7MPI">
    <property type="method" value="EM"/>
    <property type="resolution" value="3.05 A"/>
    <property type="chains" value="AO=3-199"/>
</dbReference>
<dbReference type="PDB" id="7MPJ">
    <property type="method" value="EM"/>
    <property type="resolution" value="2.70 A"/>
    <property type="chains" value="AO=3-199"/>
</dbReference>
<dbReference type="PDB" id="7N8B">
    <property type="method" value="EM"/>
    <property type="resolution" value="3.05 A"/>
    <property type="chains" value="AO=3-199"/>
</dbReference>
<dbReference type="PDB" id="7NAC">
    <property type="method" value="EM"/>
    <property type="resolution" value="3.04 A"/>
    <property type="chains" value="O=1-199"/>
</dbReference>
<dbReference type="PDB" id="7NRC">
    <property type="method" value="EM"/>
    <property type="resolution" value="3.90 A"/>
    <property type="chains" value="LQ=3-199"/>
</dbReference>
<dbReference type="PDB" id="7NRD">
    <property type="method" value="EM"/>
    <property type="resolution" value="4.36 A"/>
    <property type="chains" value="LQ=3-199"/>
</dbReference>
<dbReference type="PDB" id="7OF1">
    <property type="method" value="EM"/>
    <property type="resolution" value="3.10 A"/>
    <property type="chains" value="O=1-199"/>
</dbReference>
<dbReference type="PDB" id="7OH3">
    <property type="method" value="EM"/>
    <property type="resolution" value="3.40 A"/>
    <property type="chains" value="O=1-199"/>
</dbReference>
<dbReference type="PDB" id="7OHP">
    <property type="method" value="EM"/>
    <property type="resolution" value="3.90 A"/>
    <property type="chains" value="O=1-199"/>
</dbReference>
<dbReference type="PDB" id="7OHQ">
    <property type="method" value="EM"/>
    <property type="resolution" value="3.10 A"/>
    <property type="chains" value="O=1-199"/>
</dbReference>
<dbReference type="PDB" id="7OHR">
    <property type="method" value="EM"/>
    <property type="resolution" value="4.72 A"/>
    <property type="chains" value="O=1-199"/>
</dbReference>
<dbReference type="PDB" id="7OHS">
    <property type="method" value="EM"/>
    <property type="resolution" value="4.38 A"/>
    <property type="chains" value="O=1-199"/>
</dbReference>
<dbReference type="PDB" id="7OHT">
    <property type="method" value="EM"/>
    <property type="resolution" value="4.70 A"/>
    <property type="chains" value="O=1-199"/>
</dbReference>
<dbReference type="PDB" id="7OHU">
    <property type="method" value="EM"/>
    <property type="resolution" value="3.70 A"/>
    <property type="chains" value="O=1-199"/>
</dbReference>
<dbReference type="PDB" id="7OHV">
    <property type="method" value="EM"/>
    <property type="resolution" value="3.90 A"/>
    <property type="chains" value="O=1-199"/>
</dbReference>
<dbReference type="PDB" id="7OHW">
    <property type="method" value="EM"/>
    <property type="resolution" value="3.50 A"/>
    <property type="chains" value="O=1-199"/>
</dbReference>
<dbReference type="PDB" id="7OHX">
    <property type="method" value="EM"/>
    <property type="resolution" value="3.30 A"/>
    <property type="chains" value="O=1-199"/>
</dbReference>
<dbReference type="PDB" id="7OHY">
    <property type="method" value="EM"/>
    <property type="resolution" value="3.90 A"/>
    <property type="chains" value="O=1-199"/>
</dbReference>
<dbReference type="PDB" id="7R7A">
    <property type="method" value="EM"/>
    <property type="resolution" value="3.04 A"/>
    <property type="chains" value="O=1-199"/>
</dbReference>
<dbReference type="PDB" id="7TOO">
    <property type="method" value="EM"/>
    <property type="resolution" value="2.70 A"/>
    <property type="chains" value="AL16=1-199"/>
</dbReference>
<dbReference type="PDB" id="7TOP">
    <property type="method" value="EM"/>
    <property type="resolution" value="2.40 A"/>
    <property type="chains" value="AL16=1-199"/>
</dbReference>
<dbReference type="PDB" id="7U0H">
    <property type="method" value="EM"/>
    <property type="resolution" value="2.76 A"/>
    <property type="chains" value="O=1-199"/>
</dbReference>
<dbReference type="PDB" id="7UG6">
    <property type="method" value="EM"/>
    <property type="resolution" value="2.90 A"/>
    <property type="chains" value="O=1-199"/>
</dbReference>
<dbReference type="PDB" id="7UOO">
    <property type="method" value="EM"/>
    <property type="resolution" value="2.34 A"/>
    <property type="chains" value="O=1-199"/>
</dbReference>
<dbReference type="PDB" id="7UQB">
    <property type="method" value="EM"/>
    <property type="resolution" value="2.43 A"/>
    <property type="chains" value="O=1-199"/>
</dbReference>
<dbReference type="PDB" id="7UQZ">
    <property type="method" value="EM"/>
    <property type="resolution" value="2.44 A"/>
    <property type="chains" value="O=3-199"/>
</dbReference>
<dbReference type="PDB" id="7V08">
    <property type="method" value="EM"/>
    <property type="resolution" value="2.36 A"/>
    <property type="chains" value="O=1-199"/>
</dbReference>
<dbReference type="PDB" id="7Z34">
    <property type="method" value="EM"/>
    <property type="resolution" value="3.80 A"/>
    <property type="chains" value="O=1-199"/>
</dbReference>
<dbReference type="PDB" id="7ZPQ">
    <property type="method" value="EM"/>
    <property type="resolution" value="3.47 A"/>
    <property type="chains" value="BN=3-199"/>
</dbReference>
<dbReference type="PDB" id="7ZRS">
    <property type="method" value="EM"/>
    <property type="resolution" value="4.80 A"/>
    <property type="chains" value="BN=3-199"/>
</dbReference>
<dbReference type="PDB" id="7ZS5">
    <property type="method" value="EM"/>
    <property type="resolution" value="3.20 A"/>
    <property type="chains" value="BP=3-199"/>
</dbReference>
<dbReference type="PDB" id="7ZUW">
    <property type="method" value="EM"/>
    <property type="resolution" value="4.30 A"/>
    <property type="chains" value="BN=3-199"/>
</dbReference>
<dbReference type="PDB" id="7ZUX">
    <property type="method" value="EM"/>
    <property type="resolution" value="2.50 A"/>
    <property type="chains" value="EN=3-199"/>
</dbReference>
<dbReference type="PDB" id="7ZW0">
    <property type="method" value="EM"/>
    <property type="resolution" value="2.40 A"/>
    <property type="chains" value="LR=1-199"/>
</dbReference>
<dbReference type="PDB" id="8AAF">
    <property type="method" value="EM"/>
    <property type="resolution" value="2.50 A"/>
    <property type="chains" value="B=1-199"/>
</dbReference>
<dbReference type="PDB" id="8AGT">
    <property type="method" value="EM"/>
    <property type="resolution" value="2.60 A"/>
    <property type="chains" value="B=1-199"/>
</dbReference>
<dbReference type="PDB" id="8AGU">
    <property type="method" value="EM"/>
    <property type="resolution" value="2.70 A"/>
    <property type="chains" value="B=1-199"/>
</dbReference>
<dbReference type="PDB" id="8AGV">
    <property type="method" value="EM"/>
    <property type="resolution" value="2.60 A"/>
    <property type="chains" value="B=1-199"/>
</dbReference>
<dbReference type="PDB" id="8AGW">
    <property type="method" value="EM"/>
    <property type="resolution" value="2.60 A"/>
    <property type="chains" value="B=1-199"/>
</dbReference>
<dbReference type="PDB" id="8AGX">
    <property type="method" value="EM"/>
    <property type="resolution" value="2.40 A"/>
    <property type="chains" value="B=1-199"/>
</dbReference>
<dbReference type="PDB" id="8AGZ">
    <property type="method" value="EM"/>
    <property type="resolution" value="2.60 A"/>
    <property type="chains" value="B=1-199"/>
</dbReference>
<dbReference type="PDB" id="8BIP">
    <property type="method" value="EM"/>
    <property type="resolution" value="3.10 A"/>
    <property type="chains" value="LO=3-199"/>
</dbReference>
<dbReference type="PDB" id="8BJQ">
    <property type="method" value="EM"/>
    <property type="resolution" value="3.80 A"/>
    <property type="chains" value="LO=3-199"/>
</dbReference>
<dbReference type="PDB" id="8BN3">
    <property type="method" value="EM"/>
    <property type="resolution" value="2.40 A"/>
    <property type="chains" value="M6=3-199"/>
</dbReference>
<dbReference type="PDB" id="8BQD">
    <property type="method" value="EM"/>
    <property type="resolution" value="3.90 A"/>
    <property type="chains" value="AU=3-199"/>
</dbReference>
<dbReference type="PDB" id="8BQX">
    <property type="method" value="EM"/>
    <property type="resolution" value="3.80 A"/>
    <property type="chains" value="AU=3-199"/>
</dbReference>
<dbReference type="PDB" id="8CCS">
    <property type="method" value="EM"/>
    <property type="resolution" value="1.97 A"/>
    <property type="chains" value="A=1-199"/>
</dbReference>
<dbReference type="PDB" id="8CDL">
    <property type="method" value="EM"/>
    <property type="resolution" value="2.72 A"/>
    <property type="chains" value="A=1-199"/>
</dbReference>
<dbReference type="PDB" id="8CDR">
    <property type="method" value="EM"/>
    <property type="resolution" value="2.04 A"/>
    <property type="chains" value="A=1-199"/>
</dbReference>
<dbReference type="PDB" id="8CEH">
    <property type="method" value="EM"/>
    <property type="resolution" value="2.05 A"/>
    <property type="chains" value="A=1-199"/>
</dbReference>
<dbReference type="PDB" id="8CF5">
    <property type="method" value="EM"/>
    <property type="resolution" value="2.71 A"/>
    <property type="chains" value="A=1-199"/>
</dbReference>
<dbReference type="PDB" id="8CG8">
    <property type="method" value="EM"/>
    <property type="resolution" value="2.57 A"/>
    <property type="chains" value="A=1-199"/>
</dbReference>
<dbReference type="PDB" id="8CGN">
    <property type="method" value="EM"/>
    <property type="resolution" value="2.28 A"/>
    <property type="chains" value="A=1-199"/>
</dbReference>
<dbReference type="PDB" id="8CIV">
    <property type="method" value="EM"/>
    <property type="resolution" value="2.47 A"/>
    <property type="chains" value="A=1-199"/>
</dbReference>
<dbReference type="PDB" id="8CKU">
    <property type="method" value="EM"/>
    <property type="resolution" value="3.11 A"/>
    <property type="chains" value="A=1-199"/>
</dbReference>
<dbReference type="PDB" id="8CMJ">
    <property type="method" value="EM"/>
    <property type="resolution" value="3.79 A"/>
    <property type="chains" value="A=1-199"/>
</dbReference>
<dbReference type="PDB" id="8E5T">
    <property type="method" value="EM"/>
    <property type="resolution" value="4.00 A"/>
    <property type="chains" value="O=1-199"/>
</dbReference>
<dbReference type="PDB" id="8EUB">
    <property type="method" value="EM"/>
    <property type="resolution" value="2.52 A"/>
    <property type="chains" value="AO=1-199"/>
</dbReference>
<dbReference type="PDB" id="8EVP">
    <property type="method" value="EM"/>
    <property type="resolution" value="2.38 A"/>
    <property type="chains" value="AO=1-199"/>
</dbReference>
<dbReference type="PDB" id="8EVQ">
    <property type="method" value="EM"/>
    <property type="resolution" value="2.72 A"/>
    <property type="chains" value="AO=1-199"/>
</dbReference>
<dbReference type="PDB" id="8EVR">
    <property type="method" value="EM"/>
    <property type="resolution" value="2.87 A"/>
    <property type="chains" value="AO=1-199"/>
</dbReference>
<dbReference type="PDB" id="8EVS">
    <property type="method" value="EM"/>
    <property type="resolution" value="2.62 A"/>
    <property type="chains" value="AO=1-199"/>
</dbReference>
<dbReference type="PDB" id="8EVT">
    <property type="method" value="EM"/>
    <property type="resolution" value="2.20 A"/>
    <property type="chains" value="AO=1-199"/>
</dbReference>
<dbReference type="PDB" id="8EWB">
    <property type="method" value="EM"/>
    <property type="resolution" value="2.87 A"/>
    <property type="chains" value="AO=1-199"/>
</dbReference>
<dbReference type="PDB" id="8EWC">
    <property type="method" value="EM"/>
    <property type="resolution" value="2.45 A"/>
    <property type="chains" value="AO=1-199"/>
</dbReference>
<dbReference type="PDB" id="8HFR">
    <property type="method" value="EM"/>
    <property type="resolution" value="2.64 A"/>
    <property type="chains" value="O6=1-199"/>
</dbReference>
<dbReference type="PDB" id="8K2D">
    <property type="method" value="EM"/>
    <property type="resolution" value="3.20 A"/>
    <property type="chains" value="LO=1-199"/>
</dbReference>
<dbReference type="PDB" id="8K82">
    <property type="method" value="EM"/>
    <property type="resolution" value="3.00 A"/>
    <property type="chains" value="LO=1-199"/>
</dbReference>
<dbReference type="PDB" id="8P4V">
    <property type="method" value="X-ray"/>
    <property type="resolution" value="3.16 A"/>
    <property type="chains" value="CQ/w=1-199"/>
</dbReference>
<dbReference type="PDB" id="8P8M">
    <property type="method" value="EM"/>
    <property type="resolution" value="2.66 A"/>
    <property type="chains" value="JW=1-199"/>
</dbReference>
<dbReference type="PDB" id="8P8N">
    <property type="method" value="EM"/>
    <property type="resolution" value="2.15 A"/>
    <property type="chains" value="JW=1-199"/>
</dbReference>
<dbReference type="PDB" id="8P8U">
    <property type="method" value="EM"/>
    <property type="resolution" value="2.23 A"/>
    <property type="chains" value="JW=1-199"/>
</dbReference>
<dbReference type="PDB" id="8P9A">
    <property type="method" value="X-ray"/>
    <property type="resolution" value="2.90 A"/>
    <property type="chains" value="CQ/w=1-199"/>
</dbReference>
<dbReference type="PDB" id="8PFR">
    <property type="method" value="EM"/>
    <property type="resolution" value="2.15 A"/>
    <property type="chains" value="JW=1-199"/>
</dbReference>
<dbReference type="PDB" id="8T2X">
    <property type="method" value="EM"/>
    <property type="resolution" value="2.46 A"/>
    <property type="chains" value="AO=1-199"/>
</dbReference>
<dbReference type="PDB" id="8T2Y">
    <property type="method" value="EM"/>
    <property type="resolution" value="2.20 A"/>
    <property type="chains" value="AO=1-199"/>
</dbReference>
<dbReference type="PDB" id="8T2Z">
    <property type="method" value="EM"/>
    <property type="resolution" value="2.40 A"/>
    <property type="chains" value="AO=1-199"/>
</dbReference>
<dbReference type="PDB" id="8T30">
    <property type="method" value="EM"/>
    <property type="resolution" value="2.88 A"/>
    <property type="chains" value="AO=1-199"/>
</dbReference>
<dbReference type="PDB" id="8T3A">
    <property type="method" value="EM"/>
    <property type="resolution" value="2.86 A"/>
    <property type="chains" value="AO=1-199"/>
</dbReference>
<dbReference type="PDB" id="8T3B">
    <property type="method" value="EM"/>
    <property type="resolution" value="3.08 A"/>
    <property type="chains" value="AO=1-199"/>
</dbReference>
<dbReference type="PDB" id="8T3C">
    <property type="method" value="EM"/>
    <property type="resolution" value="3.86 A"/>
    <property type="chains" value="AO=1-199"/>
</dbReference>
<dbReference type="PDB" id="8T3D">
    <property type="method" value="EM"/>
    <property type="resolution" value="2.95 A"/>
    <property type="chains" value="AO=1-199"/>
</dbReference>
<dbReference type="PDB" id="8T3E">
    <property type="method" value="EM"/>
    <property type="resolution" value="3.04 A"/>
    <property type="chains" value="AO=1-199"/>
</dbReference>
<dbReference type="PDB" id="8T3F">
    <property type="method" value="EM"/>
    <property type="resolution" value="3.09 A"/>
    <property type="chains" value="AO=1-199"/>
</dbReference>
<dbReference type="PDB" id="8UT0">
    <property type="method" value="EM"/>
    <property type="resolution" value="3.22 A"/>
    <property type="chains" value="LQ=3-199"/>
</dbReference>
<dbReference type="PDB" id="8UTI">
    <property type="method" value="EM"/>
    <property type="resolution" value="3.13 A"/>
    <property type="chains" value="LQ=3-199"/>
</dbReference>
<dbReference type="PDB" id="8V83">
    <property type="method" value="EM"/>
    <property type="resolution" value="2.53 A"/>
    <property type="chains" value="O=1-199"/>
</dbReference>
<dbReference type="PDB" id="8V84">
    <property type="method" value="EM"/>
    <property type="resolution" value="2.70 A"/>
    <property type="chains" value="O=1-199"/>
</dbReference>
<dbReference type="PDB" id="8V87">
    <property type="method" value="EM"/>
    <property type="resolution" value="2.66 A"/>
    <property type="chains" value="O=1-199"/>
</dbReference>
<dbReference type="PDB" id="8XU8">
    <property type="method" value="EM"/>
    <property type="resolution" value="3.40 A"/>
    <property type="chains" value="Q=3-199"/>
</dbReference>
<dbReference type="PDB" id="8Y0U">
    <property type="method" value="EM"/>
    <property type="resolution" value="3.59 A"/>
    <property type="chains" value="LO=1-199"/>
</dbReference>
<dbReference type="PDB" id="8YLD">
    <property type="method" value="EM"/>
    <property type="resolution" value="3.90 A"/>
    <property type="chains" value="Q=3-199"/>
</dbReference>
<dbReference type="PDB" id="8YLR">
    <property type="method" value="EM"/>
    <property type="resolution" value="3.90 A"/>
    <property type="chains" value="Q=3-199"/>
</dbReference>
<dbReference type="PDB" id="8Z70">
    <property type="method" value="EM"/>
    <property type="resolution" value="3.20 A"/>
    <property type="chains" value="Q=3-199"/>
</dbReference>
<dbReference type="PDB" id="8Z71">
    <property type="method" value="EM"/>
    <property type="resolution" value="3.60 A"/>
    <property type="chains" value="Q=3-199"/>
</dbReference>
<dbReference type="PDB" id="9F9S">
    <property type="method" value="EM"/>
    <property type="resolution" value="2.90 A"/>
    <property type="chains" value="LJ/MJ=1-199"/>
</dbReference>
<dbReference type="PDBsum" id="3J6X"/>
<dbReference type="PDBsum" id="3J6Y"/>
<dbReference type="PDBsum" id="3J77"/>
<dbReference type="PDBsum" id="3J78"/>
<dbReference type="PDBsum" id="3JCT"/>
<dbReference type="PDBsum" id="4U3M"/>
<dbReference type="PDBsum" id="4U3N"/>
<dbReference type="PDBsum" id="4U3U"/>
<dbReference type="PDBsum" id="4U4N"/>
<dbReference type="PDBsum" id="4U4O"/>
<dbReference type="PDBsum" id="4U4Q"/>
<dbReference type="PDBsum" id="4U4R"/>
<dbReference type="PDBsum" id="4U4U"/>
<dbReference type="PDBsum" id="4U4Y"/>
<dbReference type="PDBsum" id="4U4Z"/>
<dbReference type="PDBsum" id="4U50"/>
<dbReference type="PDBsum" id="4U51"/>
<dbReference type="PDBsum" id="4U52"/>
<dbReference type="PDBsum" id="4U53"/>
<dbReference type="PDBsum" id="4U55"/>
<dbReference type="PDBsum" id="4U56"/>
<dbReference type="PDBsum" id="4U6F"/>
<dbReference type="PDBsum" id="4V4B"/>
<dbReference type="PDBsum" id="4V5Z"/>
<dbReference type="PDBsum" id="4V6I"/>
<dbReference type="PDBsum" id="4V7F"/>
<dbReference type="PDBsum" id="4V7R"/>
<dbReference type="PDBsum" id="4V88"/>
<dbReference type="PDBsum" id="4V8T"/>
<dbReference type="PDBsum" id="4V8Y"/>
<dbReference type="PDBsum" id="4V8Z"/>
<dbReference type="PDBsum" id="4V91"/>
<dbReference type="PDBsum" id="5APN"/>
<dbReference type="PDBsum" id="5APO"/>
<dbReference type="PDBsum" id="5DAT"/>
<dbReference type="PDBsum" id="5DC3"/>
<dbReference type="PDBsum" id="5DGE"/>
<dbReference type="PDBsum" id="5DGF"/>
<dbReference type="PDBsum" id="5DGV"/>
<dbReference type="PDBsum" id="5FCI"/>
<dbReference type="PDBsum" id="5FCJ"/>
<dbReference type="PDBsum" id="5GAK"/>
<dbReference type="PDBsum" id="5H4P"/>
<dbReference type="PDBsum" id="5I4L"/>
<dbReference type="PDBsum" id="5JCS"/>
<dbReference type="PDBsum" id="5JUO"/>
<dbReference type="PDBsum" id="5JUP"/>
<dbReference type="PDBsum" id="5JUS"/>
<dbReference type="PDBsum" id="5JUT"/>
<dbReference type="PDBsum" id="5JUU"/>
<dbReference type="PDBsum" id="5LYB"/>
<dbReference type="PDBsum" id="5M1J"/>
<dbReference type="PDBsum" id="5MC6"/>
<dbReference type="PDBsum" id="5MEI"/>
<dbReference type="PDBsum" id="5NDG"/>
<dbReference type="PDBsum" id="5NDV"/>
<dbReference type="PDBsum" id="5NDW"/>
<dbReference type="PDBsum" id="5OBM"/>
<dbReference type="PDBsum" id="5ON6"/>
<dbReference type="PDBsum" id="5T62"/>
<dbReference type="PDBsum" id="5T6R"/>
<dbReference type="PDBsum" id="5TBW"/>
<dbReference type="PDBsum" id="5TGA"/>
<dbReference type="PDBsum" id="5TGM"/>
<dbReference type="PDBsum" id="5Z3G"/>
<dbReference type="PDBsum" id="6C0F"/>
<dbReference type="PDBsum" id="6CB1"/>
<dbReference type="PDBsum" id="6ELZ"/>
<dbReference type="PDBsum" id="6EM1"/>
<dbReference type="PDBsum" id="6EM3"/>
<dbReference type="PDBsum" id="6EM4"/>
<dbReference type="PDBsum" id="6EM5"/>
<dbReference type="PDBsum" id="6FT6"/>
<dbReference type="PDBsum" id="6GQ1"/>
<dbReference type="PDBsum" id="6GQB"/>
<dbReference type="PDBsum" id="6GQV"/>
<dbReference type="PDBsum" id="6HD7"/>
<dbReference type="PDBsum" id="6HHQ"/>
<dbReference type="PDBsum" id="6I7O"/>
<dbReference type="PDBsum" id="6M62"/>
<dbReference type="PDBsum" id="6N8J"/>
<dbReference type="PDBsum" id="6N8K"/>
<dbReference type="PDBsum" id="6N8L"/>
<dbReference type="PDBsum" id="6N8M"/>
<dbReference type="PDBsum" id="6N8N"/>
<dbReference type="PDBsum" id="6N8O"/>
<dbReference type="PDBsum" id="6OIG"/>
<dbReference type="PDBsum" id="6Q8Y"/>
<dbReference type="PDBsum" id="6R84"/>
<dbReference type="PDBsum" id="6R86"/>
<dbReference type="PDBsum" id="6R87"/>
<dbReference type="PDBsum" id="6S47"/>
<dbReference type="PDBsum" id="6SNT"/>
<dbReference type="PDBsum" id="6SV4"/>
<dbReference type="PDBsum" id="6T4Q"/>
<dbReference type="PDBsum" id="6T7I"/>
<dbReference type="PDBsum" id="6T7T"/>
<dbReference type="PDBsum" id="6T83"/>
<dbReference type="PDBsum" id="6TB3"/>
<dbReference type="PDBsum" id="6TNU"/>
<dbReference type="PDBsum" id="6WOO"/>
<dbReference type="PDBsum" id="6XIQ"/>
<dbReference type="PDBsum" id="6XIR"/>
<dbReference type="PDBsum" id="6YLG"/>
<dbReference type="PDBsum" id="6YLH"/>
<dbReference type="PDBsum" id="6YLX"/>
<dbReference type="PDBsum" id="6YLY"/>
<dbReference type="PDBsum" id="6Z6J"/>
<dbReference type="PDBsum" id="6Z6K"/>
<dbReference type="PDBsum" id="7AZY"/>
<dbReference type="PDBsum" id="7B7D"/>
<dbReference type="PDBsum" id="7BT6"/>
<dbReference type="PDBsum" id="7BTB"/>
<dbReference type="PDBsum" id="7MPI"/>
<dbReference type="PDBsum" id="7MPJ"/>
<dbReference type="PDBsum" id="7N8B"/>
<dbReference type="PDBsum" id="7NAC"/>
<dbReference type="PDBsum" id="7NRC"/>
<dbReference type="PDBsum" id="7NRD"/>
<dbReference type="PDBsum" id="7OF1"/>
<dbReference type="PDBsum" id="7OH3"/>
<dbReference type="PDBsum" id="7OHP"/>
<dbReference type="PDBsum" id="7OHQ"/>
<dbReference type="PDBsum" id="7OHR"/>
<dbReference type="PDBsum" id="7OHS"/>
<dbReference type="PDBsum" id="7OHT"/>
<dbReference type="PDBsum" id="7OHU"/>
<dbReference type="PDBsum" id="7OHV"/>
<dbReference type="PDBsum" id="7OHW"/>
<dbReference type="PDBsum" id="7OHX"/>
<dbReference type="PDBsum" id="7OHY"/>
<dbReference type="PDBsum" id="7R7A"/>
<dbReference type="PDBsum" id="7TOO"/>
<dbReference type="PDBsum" id="7TOP"/>
<dbReference type="PDBsum" id="7U0H"/>
<dbReference type="PDBsum" id="7UG6"/>
<dbReference type="PDBsum" id="7UOO"/>
<dbReference type="PDBsum" id="7UQB"/>
<dbReference type="PDBsum" id="7UQZ"/>
<dbReference type="PDBsum" id="7V08"/>
<dbReference type="PDBsum" id="7Z34"/>
<dbReference type="PDBsum" id="7ZPQ"/>
<dbReference type="PDBsum" id="7ZRS"/>
<dbReference type="PDBsum" id="7ZS5"/>
<dbReference type="PDBsum" id="7ZUW"/>
<dbReference type="PDBsum" id="7ZUX"/>
<dbReference type="PDBsum" id="7ZW0"/>
<dbReference type="PDBsum" id="8AAF"/>
<dbReference type="PDBsum" id="8AGT"/>
<dbReference type="PDBsum" id="8AGU"/>
<dbReference type="PDBsum" id="8AGV"/>
<dbReference type="PDBsum" id="8AGW"/>
<dbReference type="PDBsum" id="8AGX"/>
<dbReference type="PDBsum" id="8AGZ"/>
<dbReference type="PDBsum" id="8BIP"/>
<dbReference type="PDBsum" id="8BJQ"/>
<dbReference type="PDBsum" id="8BN3"/>
<dbReference type="PDBsum" id="8BQD"/>
<dbReference type="PDBsum" id="8BQX"/>
<dbReference type="PDBsum" id="8CCS"/>
<dbReference type="PDBsum" id="8CDL"/>
<dbReference type="PDBsum" id="8CDR"/>
<dbReference type="PDBsum" id="8CEH"/>
<dbReference type="PDBsum" id="8CF5"/>
<dbReference type="PDBsum" id="8CG8"/>
<dbReference type="PDBsum" id="8CGN"/>
<dbReference type="PDBsum" id="8CIV"/>
<dbReference type="PDBsum" id="8CKU"/>
<dbReference type="PDBsum" id="8CMJ"/>
<dbReference type="PDBsum" id="8E5T"/>
<dbReference type="PDBsum" id="8EUB"/>
<dbReference type="PDBsum" id="8EVP"/>
<dbReference type="PDBsum" id="8EVQ"/>
<dbReference type="PDBsum" id="8EVR"/>
<dbReference type="PDBsum" id="8EVS"/>
<dbReference type="PDBsum" id="8EVT"/>
<dbReference type="PDBsum" id="8EWB"/>
<dbReference type="PDBsum" id="8EWC"/>
<dbReference type="PDBsum" id="8HFR"/>
<dbReference type="PDBsum" id="8K2D"/>
<dbReference type="PDBsum" id="8K82"/>
<dbReference type="PDBsum" id="8P4V"/>
<dbReference type="PDBsum" id="8P8M"/>
<dbReference type="PDBsum" id="8P8N"/>
<dbReference type="PDBsum" id="8P8U"/>
<dbReference type="PDBsum" id="8P9A"/>
<dbReference type="PDBsum" id="8PFR"/>
<dbReference type="PDBsum" id="8T2X"/>
<dbReference type="PDBsum" id="8T2Y"/>
<dbReference type="PDBsum" id="8T2Z"/>
<dbReference type="PDBsum" id="8T30"/>
<dbReference type="PDBsum" id="8T3A"/>
<dbReference type="PDBsum" id="8T3B"/>
<dbReference type="PDBsum" id="8T3C"/>
<dbReference type="PDBsum" id="8T3D"/>
<dbReference type="PDBsum" id="8T3E"/>
<dbReference type="PDBsum" id="8T3F"/>
<dbReference type="PDBsum" id="8UT0"/>
<dbReference type="PDBsum" id="8UTI"/>
<dbReference type="PDBsum" id="8V83"/>
<dbReference type="PDBsum" id="8V84"/>
<dbReference type="PDBsum" id="8V87"/>
<dbReference type="PDBsum" id="8XU8"/>
<dbReference type="PDBsum" id="8Y0U"/>
<dbReference type="PDBsum" id="8YLD"/>
<dbReference type="PDBsum" id="8YLR"/>
<dbReference type="PDBsum" id="8Z70"/>
<dbReference type="PDBsum" id="8Z71"/>
<dbReference type="PDBsum" id="9F9S"/>
<dbReference type="EMDB" id="EMD-0047"/>
<dbReference type="EMDB" id="EMD-0048"/>
<dbReference type="EMDB" id="EMD-0049"/>
<dbReference type="EMDB" id="EMD-0202"/>
<dbReference type="EMDB" id="EMD-0369"/>
<dbReference type="EMDB" id="EMD-0370"/>
<dbReference type="EMDB" id="EMD-0371"/>
<dbReference type="EMDB" id="EMD-0372"/>
<dbReference type="EMDB" id="EMD-0373"/>
<dbReference type="EMDB" id="EMD-0374"/>
<dbReference type="EMDB" id="EMD-10098"/>
<dbReference type="EMDB" id="EMD-10262"/>
<dbReference type="EMDB" id="EMD-10315"/>
<dbReference type="EMDB" id="EMD-10377"/>
<dbReference type="EMDB" id="EMD-10396"/>
<dbReference type="EMDB" id="EMD-10397"/>
<dbReference type="EMDB" id="EMD-10398"/>
<dbReference type="EMDB" id="EMD-10431"/>
<dbReference type="EMDB" id="EMD-10537"/>
<dbReference type="EMDB" id="EMD-10838"/>
<dbReference type="EMDB" id="EMD-10839"/>
<dbReference type="EMDB" id="EMD-10841"/>
<dbReference type="EMDB" id="EMD-10842"/>
<dbReference type="EMDB" id="EMD-11096"/>
<dbReference type="EMDB" id="EMD-11097"/>
<dbReference type="EMDB" id="EMD-11951"/>
<dbReference type="EMDB" id="EMD-12081"/>
<dbReference type="EMDB" id="EMD-12534"/>
<dbReference type="EMDB" id="EMD-12535"/>
<dbReference type="EMDB" id="EMD-12866"/>
<dbReference type="EMDB" id="EMD-12892"/>
<dbReference type="EMDB" id="EMD-12904"/>
<dbReference type="EMDB" id="EMD-12905"/>
<dbReference type="EMDB" id="EMD-12906"/>
<dbReference type="EMDB" id="EMD-12907"/>
<dbReference type="EMDB" id="EMD-12908"/>
<dbReference type="EMDB" id="EMD-12909"/>
<dbReference type="EMDB" id="EMD-12910"/>
<dbReference type="EMDB" id="EMD-12911"/>
<dbReference type="EMDB" id="EMD-12912"/>
<dbReference type="EMDB" id="EMD-12913"/>
<dbReference type="EMDB" id="EMD-14471"/>
<dbReference type="EMDB" id="EMD-14861"/>
<dbReference type="EMDB" id="EMD-14921"/>
<dbReference type="EMDB" id="EMD-14926"/>
<dbReference type="EMDB" id="EMD-14978"/>
<dbReference type="EMDB" id="EMD-14979"/>
<dbReference type="EMDB" id="EMD-14990"/>
<dbReference type="EMDB" id="EMD-15296"/>
<dbReference type="EMDB" id="EMD-15423"/>
<dbReference type="EMDB" id="EMD-15424"/>
<dbReference type="EMDB" id="EMD-15425"/>
<dbReference type="EMDB" id="EMD-15426"/>
<dbReference type="EMDB" id="EMD-15427"/>
<dbReference type="EMDB" id="EMD-15428"/>
<dbReference type="EMDB" id="EMD-16086"/>
<dbReference type="EMDB" id="EMD-16090"/>
<dbReference type="EMDB" id="EMD-16127"/>
<dbReference type="EMDB" id="EMD-16182"/>
<dbReference type="EMDB" id="EMD-16191"/>
<dbReference type="EMDB" id="EMD-16563"/>
<dbReference type="EMDB" id="EMD-16591"/>
<dbReference type="EMDB" id="EMD-16594"/>
<dbReference type="EMDB" id="EMD-16609"/>
<dbReference type="EMDB" id="EMD-16616"/>
<dbReference type="EMDB" id="EMD-16634"/>
<dbReference type="EMDB" id="EMD-16648"/>
<dbReference type="EMDB" id="EMD-16684"/>
<dbReference type="EMDB" id="EMD-16702"/>
<dbReference type="EMDB" id="EMD-16729"/>
<dbReference type="EMDB" id="EMD-17549"/>
<dbReference type="EMDB" id="EMD-17550"/>
<dbReference type="EMDB" id="EMD-17552"/>
<dbReference type="EMDB" id="EMD-17653"/>
<dbReference type="EMDB" id="EMD-20077"/>
<dbReference type="EMDB" id="EMD-21859"/>
<dbReference type="EMDB" id="EMD-22196"/>
<dbReference type="EMDB" id="EMD-22198"/>
<dbReference type="EMDB" id="EMD-23934"/>
<dbReference type="EMDB" id="EMD-23935"/>
<dbReference type="EMDB" id="EMD-24235"/>
<dbReference type="EMDB" id="EMD-24269"/>
<dbReference type="EMDB" id="EMD-24296"/>
<dbReference type="EMDB" id="EMD-26033"/>
<dbReference type="EMDB" id="EMD-26034"/>
<dbReference type="EMDB" id="EMD-26259"/>
<dbReference type="EMDB" id="EMD-26485"/>
<dbReference type="EMDB" id="EMD-26651"/>
<dbReference type="EMDB" id="EMD-26686"/>
<dbReference type="EMDB" id="EMD-26703"/>
<dbReference type="EMDB" id="EMD-26941"/>
<dbReference type="EMDB" id="EMD-27919"/>
<dbReference type="EMDB" id="EMD-28610"/>
<dbReference type="EMDB" id="EMD-28632"/>
<dbReference type="EMDB" id="EMD-28633"/>
<dbReference type="EMDB" id="EMD-28634"/>
<dbReference type="EMDB" id="EMD-28635"/>
<dbReference type="EMDB" id="EMD-28636"/>
<dbReference type="EMDB" id="EMD-28642"/>
<dbReference type="EMDB" id="EMD-28643"/>
<dbReference type="EMDB" id="EMD-30108"/>
<dbReference type="EMDB" id="EMD-30170"/>
<dbReference type="EMDB" id="EMD-30174"/>
<dbReference type="EMDB" id="EMD-3461"/>
<dbReference type="EMDB" id="EMD-34725"/>
<dbReference type="EMDB" id="EMD-36839"/>
<dbReference type="EMDB" id="EMD-36945"/>
<dbReference type="EMDB" id="EMD-38660"/>
<dbReference type="EMDB" id="EMD-40990"/>
<dbReference type="EMDB" id="EMD-40991"/>
<dbReference type="EMDB" id="EMD-40992"/>
<dbReference type="EMDB" id="EMD-40993"/>
<dbReference type="EMDB" id="EMD-40997"/>
<dbReference type="EMDB" id="EMD-40998"/>
<dbReference type="EMDB" id="EMD-40999"/>
<dbReference type="EMDB" id="EMD-41000"/>
<dbReference type="EMDB" id="EMD-41001"/>
<dbReference type="EMDB" id="EMD-41002"/>
<dbReference type="EMDB" id="EMD-4140"/>
<dbReference type="EMDB" id="EMD-42525"/>
<dbReference type="EMDB" id="EMD-42540"/>
<dbReference type="EMDB" id="EMD-43017"/>
<dbReference type="EMDB" id="EMD-4302"/>
<dbReference type="EMDB" id="EMD-43021"/>
<dbReference type="EMDB" id="EMD-43027"/>
<dbReference type="EMDB" id="EMD-4427"/>
<dbReference type="EMDB" id="EMD-4474"/>
<dbReference type="EMDB" id="EMD-4751"/>
<dbReference type="EMDB" id="EMD-4752"/>
<dbReference type="EMDB" id="EMD-4753"/>
<dbReference type="EMDB" id="EMD-50259"/>
<dbReference type="EMDB" id="EMD-6878"/>
<dbReference type="EMDB" id="EMD-7324"/>
<dbReference type="EMDB" id="EMD-8362"/>
<dbReference type="EMDB" id="EMD-8368"/>
<dbReference type="SMR" id="P26784"/>
<dbReference type="BioGRID" id="34858">
    <property type="interactions" value="446"/>
</dbReference>
<dbReference type="ComplexPortal" id="CPX-1601">
    <property type="entry name" value="60S cytosolic large ribosomal subunit"/>
</dbReference>
<dbReference type="FunCoup" id="P26784">
    <property type="interactions" value="1160"/>
</dbReference>
<dbReference type="IntAct" id="P26784">
    <property type="interactions" value="146"/>
</dbReference>
<dbReference type="MINT" id="P26784"/>
<dbReference type="STRING" id="4932.YIL133C"/>
<dbReference type="CarbonylDB" id="P26784"/>
<dbReference type="iPTMnet" id="P26784"/>
<dbReference type="PaxDb" id="4932-YIL133C"/>
<dbReference type="PeptideAtlas" id="P26784"/>
<dbReference type="EnsemblFungi" id="YIL133C_mRNA">
    <property type="protein sequence ID" value="YIL133C"/>
    <property type="gene ID" value="YIL133C"/>
</dbReference>
<dbReference type="GeneID" id="854673"/>
<dbReference type="KEGG" id="sce:YIL133C"/>
<dbReference type="AGR" id="SGD:S000001395"/>
<dbReference type="SGD" id="S000001395">
    <property type="gene designation" value="RPL16A"/>
</dbReference>
<dbReference type="VEuPathDB" id="FungiDB:YIL133C"/>
<dbReference type="eggNOG" id="KOG3204">
    <property type="taxonomic scope" value="Eukaryota"/>
</dbReference>
<dbReference type="GeneTree" id="ENSGT00390000010799"/>
<dbReference type="HOGENOM" id="CLU_076922_0_0_1"/>
<dbReference type="InParanoid" id="P26784"/>
<dbReference type="OMA" id="HMMGRLA"/>
<dbReference type="OrthoDB" id="1882297at2759"/>
<dbReference type="BioCyc" id="YEAST:G3O-31384-MONOMER"/>
<dbReference type="Reactome" id="R-SCE-156827">
    <property type="pathway name" value="L13a-mediated translational silencing of Ceruloplasmin expression"/>
</dbReference>
<dbReference type="Reactome" id="R-SCE-1799339">
    <property type="pathway name" value="SRP-dependent cotranslational protein targeting to membrane"/>
</dbReference>
<dbReference type="Reactome" id="R-SCE-72689">
    <property type="pathway name" value="Formation of a pool of free 40S subunits"/>
</dbReference>
<dbReference type="Reactome" id="R-SCE-72706">
    <property type="pathway name" value="GTP hydrolysis and joining of the 60S ribosomal subunit"/>
</dbReference>
<dbReference type="Reactome" id="R-SCE-975956">
    <property type="pathway name" value="Nonsense Mediated Decay (NMD) independent of the Exon Junction Complex (EJC)"/>
</dbReference>
<dbReference type="Reactome" id="R-SCE-975957">
    <property type="pathway name" value="Nonsense Mediated Decay (NMD) enhanced by the Exon Junction Complex (EJC)"/>
</dbReference>
<dbReference type="BioGRID-ORCS" id="854673">
    <property type="hits" value="1 hit in 10 CRISPR screens"/>
</dbReference>
<dbReference type="ChiTaRS" id="RPL16A">
    <property type="organism name" value="yeast"/>
</dbReference>
<dbReference type="PRO" id="PR:P26784"/>
<dbReference type="Proteomes" id="UP000002311">
    <property type="component" value="Chromosome IX"/>
</dbReference>
<dbReference type="RNAct" id="P26784">
    <property type="molecule type" value="protein"/>
</dbReference>
<dbReference type="GO" id="GO:0005829">
    <property type="term" value="C:cytosol"/>
    <property type="evidence" value="ECO:0000304"/>
    <property type="project" value="Reactome"/>
</dbReference>
<dbReference type="GO" id="GO:0022625">
    <property type="term" value="C:cytosolic large ribosomal subunit"/>
    <property type="evidence" value="ECO:0000314"/>
    <property type="project" value="SGD"/>
</dbReference>
<dbReference type="GO" id="GO:0005730">
    <property type="term" value="C:nucleolus"/>
    <property type="evidence" value="ECO:0000314"/>
    <property type="project" value="SGD"/>
</dbReference>
<dbReference type="GO" id="GO:0005840">
    <property type="term" value="C:ribosome"/>
    <property type="evidence" value="ECO:0000318"/>
    <property type="project" value="GO_Central"/>
</dbReference>
<dbReference type="GO" id="GO:0003729">
    <property type="term" value="F:mRNA binding"/>
    <property type="evidence" value="ECO:0000318"/>
    <property type="project" value="GO_Central"/>
</dbReference>
<dbReference type="GO" id="GO:0003723">
    <property type="term" value="F:RNA binding"/>
    <property type="evidence" value="ECO:0000314"/>
    <property type="project" value="SGD"/>
</dbReference>
<dbReference type="GO" id="GO:0003735">
    <property type="term" value="F:structural constituent of ribosome"/>
    <property type="evidence" value="ECO:0000318"/>
    <property type="project" value="GO_Central"/>
</dbReference>
<dbReference type="GO" id="GO:0002181">
    <property type="term" value="P:cytoplasmic translation"/>
    <property type="evidence" value="ECO:0000305"/>
    <property type="project" value="SGD"/>
</dbReference>
<dbReference type="GO" id="GO:0000470">
    <property type="term" value="P:maturation of LSU-rRNA"/>
    <property type="evidence" value="ECO:0000315"/>
    <property type="project" value="SGD"/>
</dbReference>
<dbReference type="GO" id="GO:0017148">
    <property type="term" value="P:negative regulation of translation"/>
    <property type="evidence" value="ECO:0000318"/>
    <property type="project" value="GO_Central"/>
</dbReference>
<dbReference type="CDD" id="cd00392">
    <property type="entry name" value="Ribosomal_L13"/>
    <property type="match status" value="1"/>
</dbReference>
<dbReference type="FunFam" id="3.90.1180.10:FF:000002">
    <property type="entry name" value="60S ribosomal protein L16"/>
    <property type="match status" value="1"/>
</dbReference>
<dbReference type="FunFam" id="1.20.5.4280:FF:000001">
    <property type="entry name" value="60S ribosomal protein L16-A"/>
    <property type="match status" value="1"/>
</dbReference>
<dbReference type="Gene3D" id="1.20.5.4280">
    <property type="match status" value="1"/>
</dbReference>
<dbReference type="Gene3D" id="3.90.1180.10">
    <property type="entry name" value="Ribosomal protein L13"/>
    <property type="match status" value="1"/>
</dbReference>
<dbReference type="HAMAP" id="MF_01366">
    <property type="entry name" value="Ribosomal_uL13"/>
    <property type="match status" value="1"/>
</dbReference>
<dbReference type="InterPro" id="IPR005822">
    <property type="entry name" value="Ribosomal_uL13"/>
</dbReference>
<dbReference type="InterPro" id="IPR023563">
    <property type="entry name" value="Ribosomal_uL13_CS"/>
</dbReference>
<dbReference type="InterPro" id="IPR005755">
    <property type="entry name" value="Ribosomal_uL13_euk/arc"/>
</dbReference>
<dbReference type="InterPro" id="IPR036899">
    <property type="entry name" value="Ribosomal_uL13_sf"/>
</dbReference>
<dbReference type="NCBIfam" id="TIGR01077">
    <property type="entry name" value="L13_A_E"/>
    <property type="match status" value="1"/>
</dbReference>
<dbReference type="PANTHER" id="PTHR11545:SF3">
    <property type="entry name" value="LARGE RIBOSOMAL SUBUNIT PROTEIN UL13"/>
    <property type="match status" value="1"/>
</dbReference>
<dbReference type="PANTHER" id="PTHR11545">
    <property type="entry name" value="RIBOSOMAL PROTEIN L13"/>
    <property type="match status" value="1"/>
</dbReference>
<dbReference type="Pfam" id="PF00572">
    <property type="entry name" value="Ribosomal_L13"/>
    <property type="match status" value="1"/>
</dbReference>
<dbReference type="SUPFAM" id="SSF52161">
    <property type="entry name" value="Ribosomal protein L13"/>
    <property type="match status" value="1"/>
</dbReference>
<dbReference type="PROSITE" id="PS00783">
    <property type="entry name" value="RIBOSOMAL_L13"/>
    <property type="match status" value="1"/>
</dbReference>
<proteinExistence type="evidence at protein level"/>
<accession>P26784</accession>
<accession>D6VVF4</accession>
<organism>
    <name type="scientific">Saccharomyces cerevisiae (strain ATCC 204508 / S288c)</name>
    <name type="common">Baker's yeast</name>
    <dbReference type="NCBI Taxonomy" id="559292"/>
    <lineage>
        <taxon>Eukaryota</taxon>
        <taxon>Fungi</taxon>
        <taxon>Dikarya</taxon>
        <taxon>Ascomycota</taxon>
        <taxon>Saccharomycotina</taxon>
        <taxon>Saccharomycetes</taxon>
        <taxon>Saccharomycetales</taxon>
        <taxon>Saccharomycetaceae</taxon>
        <taxon>Saccharomyces</taxon>
    </lineage>
</organism>
<sequence length="199" mass="22201">MSVEPVVVIDGKGHLVGRLASVVAKQLLNGQKIVVVRAEELNISGEFFRNKLKYHDFLRKATAFNKTRGPFHFRAPSRIFYKALRGMVSHKTARGKAALERLKVFEGIPPPYDKKKRVVVPQALRVLRLKPGRKYTTLGKLSTSVGWKYEDVVAKLEAKRKVSSAEYYAKKRAFTKKVASANATAAESDVAKQLAALGY</sequence>
<name>RL16A_YEAST</name>
<comment type="function">
    <text evidence="8">Component of the ribosome, a large ribonucleoprotein complex responsible for the synthesis of proteins in the cell. The small ribosomal subunit (SSU) binds messenger RNAs (mRNAs) and translates the encoded message by selecting cognate aminoacyl-transfer RNA (tRNA) molecules. The large subunit (LSU) contains the ribosomal catalytic site termed the peptidyl transferase center (PTC), which catalyzes the formation of peptide bonds, thereby polymerizing the amino acids delivered by tRNAs into a polypeptide chain. The nascent polypeptides leave the ribosome through a tunnel in the LSU and interact with protein factors that function in enzymatic processing, targeting, and the membrane insertion of nascent chains at the exit of the ribosomal tunnel.</text>
</comment>
<comment type="subunit">
    <text evidence="4 9">Component of the large ribosomal subunit (LSU). Mature yeast ribosomes consist of a small (40S) and a large (60S) subunit. The 40S small subunit contains 1 molecule of ribosomal RNA (18S rRNA) and 33 different proteins (encoded by 57 genes). The large 60S subunit contains 3 rRNA molecules (25S, 5.8S and 5S rRNA) and 46 different proteins (encoded by 81 genes) (PubMed:22096102, PubMed:9559554).</text>
</comment>
<comment type="subcellular location">
    <subcellularLocation>
        <location evidence="1 4">Cytoplasm</location>
    </subcellularLocation>
</comment>
<comment type="PTM">
    <text evidence="3">N-terminally acetylated by acetyltransferase NatA.</text>
</comment>
<comment type="miscellaneous">
    <text evidence="2">Present with 43300 molecules/cell in log phase SD medium.</text>
</comment>
<comment type="miscellaneous">
    <text evidence="7">There are 2 genes for uL13 in yeast.</text>
</comment>
<comment type="similarity">
    <text evidence="7">Belongs to the universal ribosomal protein uL13 family.</text>
</comment>
<gene>
    <name evidence="5" type="primary">RPL16A</name>
    <name type="synonym">RPL13</name>
    <name type="synonym">RPL21A</name>
    <name type="ordered locus">YIL133C</name>
</gene>
<evidence type="ECO:0000269" key="1">
    <source>
    </source>
</evidence>
<evidence type="ECO:0000269" key="2">
    <source>
    </source>
</evidence>
<evidence type="ECO:0000269" key="3">
    <source>
    </source>
</evidence>
<evidence type="ECO:0000269" key="4">
    <source>
    </source>
</evidence>
<evidence type="ECO:0000303" key="5">
    <source>
    </source>
</evidence>
<evidence type="ECO:0000303" key="6">
    <source>
    </source>
</evidence>
<evidence type="ECO:0000305" key="7"/>
<evidence type="ECO:0000305" key="8">
    <source>
    </source>
</evidence>
<evidence type="ECO:0000305" key="9">
    <source>
    </source>
</evidence>
<evidence type="ECO:0007744" key="10">
    <source>
    </source>
</evidence>
<evidence type="ECO:0007829" key="11">
    <source>
        <dbReference type="PDB" id="6EM3"/>
    </source>
</evidence>
<protein>
    <recommendedName>
        <fullName evidence="6">Large ribosomal subunit protein uL13A</fullName>
    </recommendedName>
    <alternativeName>
        <fullName evidence="5">60S ribosomal protein L16-A</fullName>
    </alternativeName>
    <alternativeName>
        <fullName>L13a</fullName>
    </alternativeName>
    <alternativeName>
        <fullName>L21</fullName>
    </alternativeName>
    <alternativeName>
        <fullName>RP22</fullName>
    </alternativeName>
    <alternativeName>
        <fullName>YL15</fullName>
    </alternativeName>
</protein>
<reference key="1">
    <citation type="journal article" date="1997" name="Nature">
        <title>The nucleotide sequence of Saccharomyces cerevisiae chromosome IX.</title>
        <authorList>
            <person name="Churcher C.M."/>
            <person name="Bowman S."/>
            <person name="Badcock K."/>
            <person name="Bankier A.T."/>
            <person name="Brown D."/>
            <person name="Chillingworth T."/>
            <person name="Connor R."/>
            <person name="Devlin K."/>
            <person name="Gentles S."/>
            <person name="Hamlin N."/>
            <person name="Harris D.E."/>
            <person name="Horsnell T."/>
            <person name="Hunt S."/>
            <person name="Jagels K."/>
            <person name="Jones M."/>
            <person name="Lye G."/>
            <person name="Moule S."/>
            <person name="Odell C."/>
            <person name="Pearson D."/>
            <person name="Rajandream M.A."/>
            <person name="Rice P."/>
            <person name="Rowley N."/>
            <person name="Skelton J."/>
            <person name="Smith V."/>
            <person name="Walsh S.V."/>
            <person name="Whitehead S."/>
            <person name="Barrell B.G."/>
        </authorList>
    </citation>
    <scope>NUCLEOTIDE SEQUENCE [LARGE SCALE GENOMIC DNA]</scope>
    <source>
        <strain>ATCC 204508 / S288c</strain>
    </source>
</reference>
<reference key="2">
    <citation type="journal article" date="2014" name="G3 (Bethesda)">
        <title>The reference genome sequence of Saccharomyces cerevisiae: Then and now.</title>
        <authorList>
            <person name="Engel S.R."/>
            <person name="Dietrich F.S."/>
            <person name="Fisk D.G."/>
            <person name="Binkley G."/>
            <person name="Balakrishnan R."/>
            <person name="Costanzo M.C."/>
            <person name="Dwight S.S."/>
            <person name="Hitz B.C."/>
            <person name="Karra K."/>
            <person name="Nash R.S."/>
            <person name="Weng S."/>
            <person name="Wong E.D."/>
            <person name="Lloyd P."/>
            <person name="Skrzypek M.S."/>
            <person name="Miyasato S.R."/>
            <person name="Simison M."/>
            <person name="Cherry J.M."/>
        </authorList>
    </citation>
    <scope>GENOME REANNOTATION</scope>
    <source>
        <strain>ATCC 204508 / S288c</strain>
    </source>
</reference>
<reference key="3">
    <citation type="journal article" date="1992" name="J. Biol. Chem.">
        <title>NH2-terminal acetylation of ribosomal proteins of Saccharomyces cerevisiae.</title>
        <authorList>
            <person name="Takakura H."/>
            <person name="Tsunasawa S."/>
            <person name="Miyagi M."/>
            <person name="Warner J.R."/>
        </authorList>
    </citation>
    <scope>PROTEIN SEQUENCE OF 2-26</scope>
    <scope>ACETYLATION AT SER-2 BY NATA</scope>
</reference>
<reference key="4">
    <citation type="journal article" date="1998" name="Yeast">
        <title>The list of cytoplasmic ribosomal proteins of Saccharomyces cerevisiae.</title>
        <authorList>
            <person name="Planta R.J."/>
            <person name="Mager W.H."/>
        </authorList>
    </citation>
    <scope>NOMENCLATURE</scope>
    <scope>SUBUNIT</scope>
</reference>
<reference key="5">
    <citation type="journal article" date="2003" name="Nature">
        <title>Global analysis of protein localization in budding yeast.</title>
        <authorList>
            <person name="Huh W.-K."/>
            <person name="Falvo J.V."/>
            <person name="Gerke L.C."/>
            <person name="Carroll A.S."/>
            <person name="Howson R.W."/>
            <person name="Weissman J.S."/>
            <person name="O'Shea E.K."/>
        </authorList>
    </citation>
    <scope>SUBCELLULAR LOCATION [LARGE SCALE ANALYSIS]</scope>
</reference>
<reference key="6">
    <citation type="journal article" date="2003" name="Nature">
        <title>Global analysis of protein expression in yeast.</title>
        <authorList>
            <person name="Ghaemmaghami S."/>
            <person name="Huh W.-K."/>
            <person name="Bower K."/>
            <person name="Howson R.W."/>
            <person name="Belle A."/>
            <person name="Dephoure N."/>
            <person name="O'Shea E.K."/>
            <person name="Weissman J.S."/>
        </authorList>
    </citation>
    <scope>LEVEL OF PROTEIN EXPRESSION [LARGE SCALE ANALYSIS]</scope>
</reference>
<reference key="7">
    <citation type="journal article" date="2012" name="Proc. Natl. Acad. Sci. U.S.A.">
        <title>N-terminal acetylome analyses and functional insights of the N-terminal acetyltransferase NatB.</title>
        <authorList>
            <person name="Van Damme P."/>
            <person name="Lasa M."/>
            <person name="Polevoda B."/>
            <person name="Gazquez C."/>
            <person name="Elosegui-Artola A."/>
            <person name="Kim D.S."/>
            <person name="De Juan-Pardo E."/>
            <person name="Demeyer K."/>
            <person name="Hole K."/>
            <person name="Larrea E."/>
            <person name="Timmerman E."/>
            <person name="Prieto J."/>
            <person name="Arnesen T."/>
            <person name="Sherman F."/>
            <person name="Gevaert K."/>
            <person name="Aldabe R."/>
        </authorList>
    </citation>
    <scope>IDENTIFICATION BY MASS SPECTROMETRY [LARGE SCALE ANALYSIS]</scope>
</reference>
<reference key="8">
    <citation type="journal article" date="2012" name="Proteomics">
        <title>Sites of ubiquitin attachment in Saccharomyces cerevisiae.</title>
        <authorList>
            <person name="Starita L.M."/>
            <person name="Lo R.S."/>
            <person name="Eng J.K."/>
            <person name="von Haller P.D."/>
            <person name="Fields S."/>
        </authorList>
    </citation>
    <scope>UBIQUITINATION [LARGE SCALE ANALYSIS] AT LYS-177</scope>
    <scope>IDENTIFICATION BY MASS SPECTROMETRY [LARGE SCALE ANALYSIS]</scope>
</reference>
<reference key="9">
    <citation type="journal article" date="2014" name="Curr. Opin. Struct. Biol.">
        <title>A new system for naming ribosomal proteins.</title>
        <authorList>
            <person name="Ban N."/>
            <person name="Beckmann R."/>
            <person name="Cate J.H.D."/>
            <person name="Dinman J.D."/>
            <person name="Dragon F."/>
            <person name="Ellis S.R."/>
            <person name="Lafontaine D.L.J."/>
            <person name="Lindahl L."/>
            <person name="Liljas A."/>
            <person name="Lipton J.M."/>
            <person name="McAlear M.A."/>
            <person name="Moore P.B."/>
            <person name="Noller H.F."/>
            <person name="Ortega J."/>
            <person name="Panse V.G."/>
            <person name="Ramakrishnan V."/>
            <person name="Spahn C.M.T."/>
            <person name="Steitz T.A."/>
            <person name="Tchorzewski M."/>
            <person name="Tollervey D."/>
            <person name="Warren A.J."/>
            <person name="Williamson J.R."/>
            <person name="Wilson D."/>
            <person name="Yonath A."/>
            <person name="Yusupov M."/>
        </authorList>
    </citation>
    <scope>NOMENCLATURE</scope>
</reference>
<reference key="10">
    <citation type="journal article" date="2001" name="Cell">
        <title>Structure of the 80S ribosome from Saccharomyces cerevisiae -- tRNA-ribosome and subunit-subunit interactions.</title>
        <authorList>
            <person name="Spahn C.M.T."/>
            <person name="Beckmann R."/>
            <person name="Eswar N."/>
            <person name="Penczek P.A."/>
            <person name="Sali A."/>
            <person name="Blobel G."/>
            <person name="Frank J."/>
        </authorList>
    </citation>
    <scope>3D-STRUCTURE MODELING OF 2-147</scope>
    <scope>ELECTRON MICROSCOPY</scope>
</reference>
<reference key="11">
    <citation type="journal article" date="2004" name="EMBO J.">
        <title>Domain movements of elongation factor eEF2 and the eukaryotic 80S ribosome facilitate tRNA translocation.</title>
        <authorList>
            <person name="Spahn C.M.T."/>
            <person name="Gomez-Lorenzo M.G."/>
            <person name="Grassucci R.A."/>
            <person name="Joergensen R."/>
            <person name="Andersen G.R."/>
            <person name="Beckmann R."/>
            <person name="Penczek P.A."/>
            <person name="Ballesta J.P.G."/>
            <person name="Frank J."/>
        </authorList>
    </citation>
    <scope>3D-STRUCTURE MODELING OF 2-147</scope>
    <scope>ELECTRON MICROSCOPY</scope>
</reference>
<reference key="12">
    <citation type="journal article" date="2010" name="Science">
        <title>Crystal structure of the eukaryotic ribosome.</title>
        <authorList>
            <person name="Ben-Shem A."/>
            <person name="Jenner L."/>
            <person name="Yusupova G."/>
            <person name="Yusupov M."/>
        </authorList>
    </citation>
    <scope>X-RAY CRYSTALLOGRAPHY (4.0 ANGSTROMS) OF 80S RIBOSOME</scope>
</reference>
<reference key="13">
    <citation type="journal article" date="2011" name="Science">
        <title>The structure of the eukaryotic ribosome at 3.0 A resolution.</title>
        <authorList>
            <person name="Ben-Shem A."/>
            <person name="Garreau de Loubresse N."/>
            <person name="Melnikov S."/>
            <person name="Jenner L."/>
            <person name="Yusupova G."/>
            <person name="Yusupov M."/>
        </authorList>
    </citation>
    <scope>X-RAY CRYSTALLOGRAPHY (3.0 ANGSTROMS) OF 80S RIBOSOME</scope>
    <scope>SUBUNIT</scope>
    <scope>SUBCELLULAR LOCATION</scope>
</reference>